<gene>
    <name type="primary">PSF2</name>
    <name type="ordered locus">CNC04970</name>
</gene>
<accession>P0CQ30</accession>
<accession>Q55WB8</accession>
<accession>Q5KJY1</accession>
<organism>
    <name type="scientific">Cryptococcus neoformans var. neoformans serotype D (strain JEC21 / ATCC MYA-565)</name>
    <name type="common">Filobasidiella neoformans</name>
    <dbReference type="NCBI Taxonomy" id="214684"/>
    <lineage>
        <taxon>Eukaryota</taxon>
        <taxon>Fungi</taxon>
        <taxon>Dikarya</taxon>
        <taxon>Basidiomycota</taxon>
        <taxon>Agaricomycotina</taxon>
        <taxon>Tremellomycetes</taxon>
        <taxon>Tremellales</taxon>
        <taxon>Cryptococcaceae</taxon>
        <taxon>Cryptococcus</taxon>
        <taxon>Cryptococcus neoformans species complex</taxon>
    </lineage>
</organism>
<protein>
    <recommendedName>
        <fullName>DNA replication complex GINS protein PSF2</fullName>
    </recommendedName>
</protein>
<sequence>MALPKTLHPALTPDELAFLAEHDHISIVPLFSMTRVRLISGIYGPFRPPSASRVPLWLGLSLKKKRKCRIVPPEWLSAERLQAFLRDEKENSEGFERLPRRFMEISKVLLDIASDDLSQPTLLRSLLKDIREVRQAKIRMGLQSEDVLQNDYLQVTNLTPLELCELKPFLVRAMGLMQTLRPPEEEEDEE</sequence>
<reference key="1">
    <citation type="journal article" date="2005" name="Science">
        <title>The genome of the basidiomycetous yeast and human pathogen Cryptococcus neoformans.</title>
        <authorList>
            <person name="Loftus B.J."/>
            <person name="Fung E."/>
            <person name="Roncaglia P."/>
            <person name="Rowley D."/>
            <person name="Amedeo P."/>
            <person name="Bruno D."/>
            <person name="Vamathevan J."/>
            <person name="Miranda M."/>
            <person name="Anderson I.J."/>
            <person name="Fraser J.A."/>
            <person name="Allen J.E."/>
            <person name="Bosdet I.E."/>
            <person name="Brent M.R."/>
            <person name="Chiu R."/>
            <person name="Doering T.L."/>
            <person name="Donlin M.J."/>
            <person name="D'Souza C.A."/>
            <person name="Fox D.S."/>
            <person name="Grinberg V."/>
            <person name="Fu J."/>
            <person name="Fukushima M."/>
            <person name="Haas B.J."/>
            <person name="Huang J.C."/>
            <person name="Janbon G."/>
            <person name="Jones S.J.M."/>
            <person name="Koo H.L."/>
            <person name="Krzywinski M.I."/>
            <person name="Kwon-Chung K.J."/>
            <person name="Lengeler K.B."/>
            <person name="Maiti R."/>
            <person name="Marra M.A."/>
            <person name="Marra R.E."/>
            <person name="Mathewson C.A."/>
            <person name="Mitchell T.G."/>
            <person name="Pertea M."/>
            <person name="Riggs F.R."/>
            <person name="Salzberg S.L."/>
            <person name="Schein J.E."/>
            <person name="Shvartsbeyn A."/>
            <person name="Shin H."/>
            <person name="Shumway M."/>
            <person name="Specht C.A."/>
            <person name="Suh B.B."/>
            <person name="Tenney A."/>
            <person name="Utterback T.R."/>
            <person name="Wickes B.L."/>
            <person name="Wortman J.R."/>
            <person name="Wye N.H."/>
            <person name="Kronstad J.W."/>
            <person name="Lodge J.K."/>
            <person name="Heitman J."/>
            <person name="Davis R.W."/>
            <person name="Fraser C.M."/>
            <person name="Hyman R.W."/>
        </authorList>
    </citation>
    <scope>NUCLEOTIDE SEQUENCE [LARGE SCALE GENOMIC DNA]</scope>
    <source>
        <strain>JEC21 / ATCC MYA-565</strain>
    </source>
</reference>
<comment type="function">
    <text evidence="1">The GINS complex plays an essential role in the initiation of DNA replication. Has a role in chromosome segregation (By similarity).</text>
</comment>
<comment type="subunit">
    <text evidence="1">Component of the GINS complex which is a heterotetramer of SLD5, PSF1, PSF2 and PSF3.</text>
</comment>
<comment type="subcellular location">
    <subcellularLocation>
        <location evidence="1">Nucleus</location>
    </subcellularLocation>
</comment>
<comment type="similarity">
    <text evidence="2">Belongs to the GINS2/PSF2 family.</text>
</comment>
<feature type="chain" id="PRO_0000255423" description="DNA replication complex GINS protein PSF2">
    <location>
        <begin position="1"/>
        <end position="190"/>
    </location>
</feature>
<keyword id="KW-0159">Chromosome partition</keyword>
<keyword id="KW-0235">DNA replication</keyword>
<keyword id="KW-0539">Nucleus</keyword>
<keyword id="KW-1185">Reference proteome</keyword>
<name>PSF2_CRYNJ</name>
<proteinExistence type="inferred from homology"/>
<dbReference type="EMBL" id="AE017343">
    <property type="protein sequence ID" value="AAW42713.2"/>
    <property type="molecule type" value="Genomic_DNA"/>
</dbReference>
<dbReference type="RefSeq" id="XP_570020.1">
    <property type="nucleotide sequence ID" value="XM_570020.1"/>
</dbReference>
<dbReference type="SMR" id="P0CQ30"/>
<dbReference type="FunCoup" id="P0CQ30">
    <property type="interactions" value="382"/>
</dbReference>
<dbReference type="STRING" id="214684.P0CQ30"/>
<dbReference type="PaxDb" id="214684-P0CQ30"/>
<dbReference type="eggNOG" id="KOG4071">
    <property type="taxonomic scope" value="Eukaryota"/>
</dbReference>
<dbReference type="HOGENOM" id="CLU_078274_1_0_1"/>
<dbReference type="InParanoid" id="P0CQ30"/>
<dbReference type="Proteomes" id="UP000002149">
    <property type="component" value="Chromosome 3"/>
</dbReference>
<dbReference type="GO" id="GO:0000785">
    <property type="term" value="C:chromatin"/>
    <property type="evidence" value="ECO:0007669"/>
    <property type="project" value="EnsemblFungi"/>
</dbReference>
<dbReference type="GO" id="GO:0071162">
    <property type="term" value="C:CMG complex"/>
    <property type="evidence" value="ECO:0007669"/>
    <property type="project" value="EnsemblFungi"/>
</dbReference>
<dbReference type="GO" id="GO:0000811">
    <property type="term" value="C:GINS complex"/>
    <property type="evidence" value="ECO:0000318"/>
    <property type="project" value="GO_Central"/>
</dbReference>
<dbReference type="GO" id="GO:0043596">
    <property type="term" value="C:nuclear replication fork"/>
    <property type="evidence" value="ECO:0007669"/>
    <property type="project" value="EnsemblFungi"/>
</dbReference>
<dbReference type="GO" id="GO:0007059">
    <property type="term" value="P:chromosome segregation"/>
    <property type="evidence" value="ECO:0007669"/>
    <property type="project" value="UniProtKB-KW"/>
</dbReference>
<dbReference type="GO" id="GO:0000727">
    <property type="term" value="P:double-strand break repair via break-induced replication"/>
    <property type="evidence" value="ECO:0000318"/>
    <property type="project" value="GO_Central"/>
</dbReference>
<dbReference type="GO" id="GO:0033260">
    <property type="term" value="P:nuclear DNA replication"/>
    <property type="evidence" value="ECO:0007669"/>
    <property type="project" value="EnsemblFungi"/>
</dbReference>
<dbReference type="CDD" id="cd11712">
    <property type="entry name" value="GINS_A_psf2"/>
    <property type="match status" value="1"/>
</dbReference>
<dbReference type="CDD" id="cd21694">
    <property type="entry name" value="GINS_B_Psf2"/>
    <property type="match status" value="1"/>
</dbReference>
<dbReference type="FunFam" id="1.20.58.1020:FF:000001">
    <property type="entry name" value="DNA replication complex GINS protein PSF2"/>
    <property type="match status" value="1"/>
</dbReference>
<dbReference type="FunFam" id="3.40.5.50:FF:000001">
    <property type="entry name" value="DNA replication complex GINS protein PSF2"/>
    <property type="match status" value="1"/>
</dbReference>
<dbReference type="Gene3D" id="1.20.58.1020">
    <property type="match status" value="1"/>
</dbReference>
<dbReference type="Gene3D" id="3.40.5.50">
    <property type="match status" value="1"/>
</dbReference>
<dbReference type="InterPro" id="IPR021151">
    <property type="entry name" value="GINS_A"/>
</dbReference>
<dbReference type="InterPro" id="IPR036224">
    <property type="entry name" value="GINS_bundle-like_dom_sf"/>
</dbReference>
<dbReference type="InterPro" id="IPR007257">
    <property type="entry name" value="GINS_Psf2"/>
</dbReference>
<dbReference type="InterPro" id="IPR056784">
    <property type="entry name" value="PSF2_N"/>
</dbReference>
<dbReference type="PANTHER" id="PTHR12772">
    <property type="entry name" value="DNA REPLICATION COMPLEX GINS PROTEIN PSF2"/>
    <property type="match status" value="1"/>
</dbReference>
<dbReference type="PANTHER" id="PTHR12772:SF0">
    <property type="entry name" value="DNA REPLICATION COMPLEX GINS PROTEIN PSF2"/>
    <property type="match status" value="1"/>
</dbReference>
<dbReference type="Pfam" id="PF25005">
    <property type="entry name" value="PSF2_N"/>
    <property type="match status" value="1"/>
</dbReference>
<dbReference type="Pfam" id="PF05916">
    <property type="entry name" value="Sld5"/>
    <property type="match status" value="1"/>
</dbReference>
<dbReference type="PIRSF" id="PIRSF028998">
    <property type="entry name" value="GINS_Psf2_subgr"/>
    <property type="match status" value="1"/>
</dbReference>
<dbReference type="SUPFAM" id="SSF158573">
    <property type="entry name" value="GINS helical bundle-like"/>
    <property type="match status" value="1"/>
</dbReference>
<dbReference type="SUPFAM" id="SSF160059">
    <property type="entry name" value="PriA/YqbF domain"/>
    <property type="match status" value="1"/>
</dbReference>
<evidence type="ECO:0000250" key="1"/>
<evidence type="ECO:0000305" key="2"/>